<evidence type="ECO:0000255" key="1"/>
<evidence type="ECO:0000269" key="2">
    <source>
    </source>
</evidence>
<evidence type="ECO:0000303" key="3">
    <source>
    </source>
</evidence>
<evidence type="ECO:0000305" key="4"/>
<evidence type="ECO:0000305" key="5">
    <source>
    </source>
</evidence>
<evidence type="ECO:0000312" key="6">
    <source>
        <dbReference type="EMBL" id="KIS71589.1"/>
    </source>
</evidence>
<evidence type="ECO:0000312" key="7">
    <source>
        <dbReference type="Proteomes" id="UP000000561"/>
    </source>
</evidence>
<keyword id="KW-0472">Membrane</keyword>
<keyword id="KW-1185">Reference proteome</keyword>
<keyword id="KW-0732">Signal</keyword>
<keyword id="KW-0812">Transmembrane</keyword>
<keyword id="KW-1133">Transmembrane helix</keyword>
<keyword id="KW-0843">Virulence</keyword>
<organism evidence="7">
    <name type="scientific">Mycosarcoma maydis</name>
    <name type="common">Corn smut fungus</name>
    <name type="synonym">Ustilago maydis</name>
    <dbReference type="NCBI Taxonomy" id="5270"/>
    <lineage>
        <taxon>Eukaryota</taxon>
        <taxon>Fungi</taxon>
        <taxon>Dikarya</taxon>
        <taxon>Basidiomycota</taxon>
        <taxon>Ustilaginomycotina</taxon>
        <taxon>Ustilaginomycetes</taxon>
        <taxon>Ustilaginales</taxon>
        <taxon>Ustilaginaceae</taxon>
        <taxon>Mycosarcoma</taxon>
    </lineage>
</organism>
<protein>
    <recommendedName>
        <fullName evidence="3">Virulence-associated membrane protein 1</fullName>
        <shortName evidence="3">VMP1</shortName>
    </recommendedName>
</protein>
<reference key="1">
    <citation type="journal article" date="2006" name="Nature">
        <title>Insights from the genome of the biotrophic fungal plant pathogen Ustilago maydis.</title>
        <authorList>
            <person name="Kaemper J."/>
            <person name="Kahmann R."/>
            <person name="Boelker M."/>
            <person name="Ma L.-J."/>
            <person name="Brefort T."/>
            <person name="Saville B.J."/>
            <person name="Banuett F."/>
            <person name="Kronstad J.W."/>
            <person name="Gold S.E."/>
            <person name="Mueller O."/>
            <person name="Perlin M.H."/>
            <person name="Woesten H.A.B."/>
            <person name="de Vries R."/>
            <person name="Ruiz-Herrera J."/>
            <person name="Reynaga-Pena C.G."/>
            <person name="Snetselaar K."/>
            <person name="McCann M."/>
            <person name="Perez-Martin J."/>
            <person name="Feldbruegge M."/>
            <person name="Basse C.W."/>
            <person name="Steinberg G."/>
            <person name="Ibeas J.I."/>
            <person name="Holloman W."/>
            <person name="Guzman P."/>
            <person name="Farman M.L."/>
            <person name="Stajich J.E."/>
            <person name="Sentandreu R."/>
            <person name="Gonzalez-Prieto J.M."/>
            <person name="Kennell J.C."/>
            <person name="Molina L."/>
            <person name="Schirawski J."/>
            <person name="Mendoza-Mendoza A."/>
            <person name="Greilinger D."/>
            <person name="Muench K."/>
            <person name="Roessel N."/>
            <person name="Scherer M."/>
            <person name="Vranes M."/>
            <person name="Ladendorf O."/>
            <person name="Vincon V."/>
            <person name="Fuchs U."/>
            <person name="Sandrock B."/>
            <person name="Meng S."/>
            <person name="Ho E.C.H."/>
            <person name="Cahill M.J."/>
            <person name="Boyce K.J."/>
            <person name="Klose J."/>
            <person name="Klosterman S.J."/>
            <person name="Deelstra H.J."/>
            <person name="Ortiz-Castellanos L."/>
            <person name="Li W."/>
            <person name="Sanchez-Alonso P."/>
            <person name="Schreier P.H."/>
            <person name="Haeuser-Hahn I."/>
            <person name="Vaupel M."/>
            <person name="Koopmann E."/>
            <person name="Friedrich G."/>
            <person name="Voss H."/>
            <person name="Schlueter T."/>
            <person name="Margolis J."/>
            <person name="Platt D."/>
            <person name="Swimmer C."/>
            <person name="Gnirke A."/>
            <person name="Chen F."/>
            <person name="Vysotskaia V."/>
            <person name="Mannhaupt G."/>
            <person name="Gueldener U."/>
            <person name="Muensterkoetter M."/>
            <person name="Haase D."/>
            <person name="Oesterheld M."/>
            <person name="Mewes H.-W."/>
            <person name="Mauceli E.W."/>
            <person name="DeCaprio D."/>
            <person name="Wade C.M."/>
            <person name="Butler J."/>
            <person name="Young S.K."/>
            <person name="Jaffe D.B."/>
            <person name="Calvo S.E."/>
            <person name="Nusbaum C."/>
            <person name="Galagan J.E."/>
            <person name="Birren B.W."/>
        </authorList>
    </citation>
    <scope>NUCLEOTIDE SEQUENCE [LARGE SCALE GENOMIC DNA]</scope>
    <source>
        <strain evidence="7">DSM 14603 / FGSC 9021 / UM521</strain>
    </source>
</reference>
<reference evidence="7" key="2">
    <citation type="submission" date="2014-09" db="EMBL/GenBank/DDBJ databases">
        <authorList>
            <person name="Gueldener U."/>
            <person name="Muensterkoetter M."/>
            <person name="Walter M.C."/>
            <person name="Mannhaupt G."/>
            <person name="Kahmann R."/>
        </authorList>
    </citation>
    <scope>GENOME REANNOTATION</scope>
    <source>
        <strain evidence="7">DSM 14603 / FGSC 9021 / UM521</strain>
    </source>
</reference>
<reference evidence="4" key="3">
    <citation type="journal article" date="2021" name="Front. Plant Sci.">
        <title>Identification and Characterization of Two Transmembrane Proteins Required for Virulence of Ustilago maydis.</title>
        <authorList>
            <person name="Weiland P."/>
            <person name="Altegoer F."/>
        </authorList>
    </citation>
    <scope>FUNCTION</scope>
    <scope>SUBUNIT</scope>
    <scope>SUBCELLULAR LOCATION</scope>
    <scope>DISRUPTION PHENOTYPE</scope>
    <source>
        <strain evidence="3">SG200</strain>
    </source>
</reference>
<sequence>MRGILVALTAALIFCSLTPAQPVLHIQETNRAKNRANRKLVARQPEYKAVETLEKNVNIAIAVGTALVTLVSAGVGGMLLSDHLACKSVAKQEEIMQKSWDSMHPDGFTPAGDQMRPVSFDCSTQERGLKPLQSYTNGAEMY</sequence>
<name>VIMP1_MYCMD</name>
<feature type="signal peptide" evidence="1">
    <location>
        <begin position="1"/>
        <end position="20"/>
    </location>
</feature>
<feature type="chain" id="PRO_5002229662" description="Virulence-associated membrane protein 1" evidence="1">
    <location>
        <begin position="21"/>
        <end position="142"/>
    </location>
</feature>
<feature type="transmembrane region" description="Helical" evidence="1">
    <location>
        <begin position="59"/>
        <end position="79"/>
    </location>
</feature>
<gene>
    <name evidence="3" type="primary">VMP1</name>
    <name evidence="6" type="ORF">UMAG_00032</name>
</gene>
<comment type="function">
    <text evidence="2">During infection, may play a role in establishing and maintaining biotrophy; the formation of a tight interaction zone between the host and the pathogen.</text>
</comment>
<comment type="subunit">
    <text evidence="5">Monomer.</text>
</comment>
<comment type="subcellular location">
    <subcellularLocation>
        <location evidence="5">Membrane</location>
        <topology evidence="1">Single-pass membrane protein</topology>
    </subcellularLocation>
</comment>
<comment type="disruption phenotype">
    <text evidence="2">Decreases virulence in Zea mays.</text>
</comment>
<proteinExistence type="evidence at protein level"/>
<dbReference type="EMBL" id="CM003140">
    <property type="protein sequence ID" value="KIS71589.1"/>
    <property type="molecule type" value="Genomic_DNA"/>
</dbReference>
<dbReference type="RefSeq" id="XP_011386009.1">
    <property type="nucleotide sequence ID" value="XM_011387707.1"/>
</dbReference>
<dbReference type="STRING" id="237631.A0A0D1E6R6"/>
<dbReference type="EnsemblFungi" id="KIS71589">
    <property type="protein sequence ID" value="KIS71589"/>
    <property type="gene ID" value="UMAG_00032"/>
</dbReference>
<dbReference type="GeneID" id="23561443"/>
<dbReference type="KEGG" id="uma:UMAG_00032"/>
<dbReference type="VEuPathDB" id="FungiDB:UMAG_00032"/>
<dbReference type="eggNOG" id="ENOG502R2XU">
    <property type="taxonomic scope" value="Eukaryota"/>
</dbReference>
<dbReference type="InParanoid" id="A0A0D1E6R6"/>
<dbReference type="OrthoDB" id="2552052at2759"/>
<dbReference type="PHI-base" id="PHI:11704"/>
<dbReference type="Proteomes" id="UP000000561">
    <property type="component" value="Chromosome 1"/>
</dbReference>
<dbReference type="GO" id="GO:0016020">
    <property type="term" value="C:membrane"/>
    <property type="evidence" value="ECO:0000314"/>
    <property type="project" value="UniProtKB"/>
</dbReference>
<dbReference type="GO" id="GO:0051701">
    <property type="term" value="P:biological process involved in interaction with host"/>
    <property type="evidence" value="ECO:0000315"/>
    <property type="project" value="UniProtKB"/>
</dbReference>
<accession>A0A0D1E6R6</accession>